<dbReference type="EC" id="2.1.1.156" evidence="3"/>
<dbReference type="EMBL" id="BX569694">
    <property type="protein sequence ID" value="CAE08429.1"/>
    <property type="molecule type" value="Genomic_DNA"/>
</dbReference>
<dbReference type="RefSeq" id="WP_011128772.1">
    <property type="nucleotide sequence ID" value="NC_005070.1"/>
</dbReference>
<dbReference type="SMR" id="Q7U4Z8"/>
<dbReference type="STRING" id="84588.SYNW1914"/>
<dbReference type="KEGG" id="syw:SYNW1914"/>
<dbReference type="eggNOG" id="COG2226">
    <property type="taxonomic scope" value="Bacteria"/>
</dbReference>
<dbReference type="HOGENOM" id="CLU_069129_0_0_3"/>
<dbReference type="BRENDA" id="2.1.1.156">
    <property type="organism ID" value="9130"/>
</dbReference>
<dbReference type="UniPathway" id="UPA00530">
    <property type="reaction ID" value="UER00381"/>
</dbReference>
<dbReference type="UniPathway" id="UPA00530">
    <property type="reaction ID" value="UER00382"/>
</dbReference>
<dbReference type="Proteomes" id="UP000001422">
    <property type="component" value="Chromosome"/>
</dbReference>
<dbReference type="GO" id="GO:0005829">
    <property type="term" value="C:cytosol"/>
    <property type="evidence" value="ECO:0007669"/>
    <property type="project" value="TreeGrafter"/>
</dbReference>
<dbReference type="GO" id="GO:0016594">
    <property type="term" value="F:glycine binding"/>
    <property type="evidence" value="ECO:0007669"/>
    <property type="project" value="TreeGrafter"/>
</dbReference>
<dbReference type="GO" id="GO:0017174">
    <property type="term" value="F:glycine N-methyltransferase activity"/>
    <property type="evidence" value="ECO:0000314"/>
    <property type="project" value="UniProtKB"/>
</dbReference>
<dbReference type="GO" id="GO:0042802">
    <property type="term" value="F:identical protein binding"/>
    <property type="evidence" value="ECO:0007669"/>
    <property type="project" value="TreeGrafter"/>
</dbReference>
<dbReference type="GO" id="GO:1904047">
    <property type="term" value="F:S-adenosyl-L-methionine binding"/>
    <property type="evidence" value="ECO:0007669"/>
    <property type="project" value="TreeGrafter"/>
</dbReference>
<dbReference type="GO" id="GO:0052730">
    <property type="term" value="F:sarcosine N-methyltransferase activity"/>
    <property type="evidence" value="ECO:0000314"/>
    <property type="project" value="UniProtKB"/>
</dbReference>
<dbReference type="GO" id="GO:0019286">
    <property type="term" value="P:glycine betaine biosynthetic process from glycine"/>
    <property type="evidence" value="ECO:0000314"/>
    <property type="project" value="UniProtKB"/>
</dbReference>
<dbReference type="GO" id="GO:0032259">
    <property type="term" value="P:methylation"/>
    <property type="evidence" value="ECO:0000314"/>
    <property type="project" value="UniProtKB"/>
</dbReference>
<dbReference type="GO" id="GO:0006730">
    <property type="term" value="P:one-carbon metabolic process"/>
    <property type="evidence" value="ECO:0007669"/>
    <property type="project" value="TreeGrafter"/>
</dbReference>
<dbReference type="GO" id="GO:0051289">
    <property type="term" value="P:protein homotetramerization"/>
    <property type="evidence" value="ECO:0007669"/>
    <property type="project" value="TreeGrafter"/>
</dbReference>
<dbReference type="GO" id="GO:0006111">
    <property type="term" value="P:regulation of gluconeogenesis"/>
    <property type="evidence" value="ECO:0007669"/>
    <property type="project" value="TreeGrafter"/>
</dbReference>
<dbReference type="GO" id="GO:0046498">
    <property type="term" value="P:S-adenosylhomocysteine metabolic process"/>
    <property type="evidence" value="ECO:0007669"/>
    <property type="project" value="TreeGrafter"/>
</dbReference>
<dbReference type="GO" id="GO:0046500">
    <property type="term" value="P:S-adenosylmethionine metabolic process"/>
    <property type="evidence" value="ECO:0007669"/>
    <property type="project" value="TreeGrafter"/>
</dbReference>
<dbReference type="GO" id="GO:1901052">
    <property type="term" value="P:sarcosine metabolic process"/>
    <property type="evidence" value="ECO:0007669"/>
    <property type="project" value="TreeGrafter"/>
</dbReference>
<dbReference type="CDD" id="cd02440">
    <property type="entry name" value="AdoMet_MTases"/>
    <property type="match status" value="1"/>
</dbReference>
<dbReference type="Gene3D" id="3.30.46.10">
    <property type="entry name" value="Glycine N-methyltransferase, chain A, domain 1"/>
    <property type="match status" value="1"/>
</dbReference>
<dbReference type="Gene3D" id="3.40.50.150">
    <property type="entry name" value="Vaccinia Virus protein VP39"/>
    <property type="match status" value="1"/>
</dbReference>
<dbReference type="InterPro" id="IPR014369">
    <property type="entry name" value="Gly/Sar_N_MeTrfase"/>
</dbReference>
<dbReference type="InterPro" id="IPR041698">
    <property type="entry name" value="Methyltransf_25"/>
</dbReference>
<dbReference type="InterPro" id="IPR029063">
    <property type="entry name" value="SAM-dependent_MTases_sf"/>
</dbReference>
<dbReference type="PANTHER" id="PTHR16458">
    <property type="entry name" value="GLYCINE N-METHYLTRANSFERASE"/>
    <property type="match status" value="1"/>
</dbReference>
<dbReference type="PANTHER" id="PTHR16458:SF2">
    <property type="entry name" value="GLYCINE N-METHYLTRANSFERASE"/>
    <property type="match status" value="1"/>
</dbReference>
<dbReference type="Pfam" id="PF13649">
    <property type="entry name" value="Methyltransf_25"/>
    <property type="match status" value="1"/>
</dbReference>
<dbReference type="PIRSF" id="PIRSF000385">
    <property type="entry name" value="Gly_N-mtase"/>
    <property type="match status" value="1"/>
</dbReference>
<dbReference type="SUPFAM" id="SSF53335">
    <property type="entry name" value="S-adenosyl-L-methionine-dependent methyltransferases"/>
    <property type="match status" value="1"/>
</dbReference>
<dbReference type="PROSITE" id="PS51600">
    <property type="entry name" value="SAM_GNMT"/>
    <property type="match status" value="1"/>
</dbReference>
<accession>Q7U4Z8</accession>
<feature type="chain" id="PRO_0000413612" description="Glycine/sarcosine N-methyltransferase">
    <location>
        <begin position="1"/>
        <end position="282"/>
    </location>
</feature>
<feature type="region of interest" description="Disordered" evidence="2">
    <location>
        <begin position="1"/>
        <end position="27"/>
    </location>
</feature>
<feature type="compositionally biased region" description="Polar residues" evidence="2">
    <location>
        <begin position="1"/>
        <end position="23"/>
    </location>
</feature>
<feature type="binding site" evidence="1">
    <location>
        <position position="35"/>
    </location>
    <ligand>
        <name>S-adenosyl-L-methionine</name>
        <dbReference type="ChEBI" id="CHEBI:59789"/>
    </ligand>
</feature>
<feature type="binding site" evidence="1">
    <location>
        <position position="43"/>
    </location>
    <ligand>
        <name>S-adenosyl-L-methionine</name>
        <dbReference type="ChEBI" id="CHEBI:59789"/>
    </ligand>
</feature>
<feature type="binding site" evidence="1">
    <location>
        <position position="52"/>
    </location>
    <ligand>
        <name>S-adenosyl-L-methionine</name>
        <dbReference type="ChEBI" id="CHEBI:59789"/>
    </ligand>
</feature>
<feature type="binding site" evidence="1">
    <location>
        <position position="76"/>
    </location>
    <ligand>
        <name>S-adenosyl-L-methionine</name>
        <dbReference type="ChEBI" id="CHEBI:59789"/>
    </ligand>
</feature>
<feature type="binding site" evidence="1">
    <location>
        <position position="97"/>
    </location>
    <ligand>
        <name>S-adenosyl-L-methionine</name>
        <dbReference type="ChEBI" id="CHEBI:59789"/>
    </ligand>
</feature>
<feature type="binding site" evidence="1">
    <location>
        <begin position="123"/>
        <end position="124"/>
    </location>
    <ligand>
        <name>S-adenosyl-L-methionine</name>
        <dbReference type="ChEBI" id="CHEBI:59789"/>
    </ligand>
</feature>
<feature type="binding site" evidence="1">
    <location>
        <position position="141"/>
    </location>
    <ligand>
        <name>S-adenosyl-L-methionine</name>
        <dbReference type="ChEBI" id="CHEBI:59789"/>
    </ligand>
</feature>
<feature type="binding site" evidence="1">
    <location>
        <position position="143"/>
    </location>
    <ligand>
        <name>substrate</name>
    </ligand>
</feature>
<feature type="binding site" evidence="1">
    <location>
        <position position="176"/>
    </location>
    <ligand>
        <name>substrate</name>
    </ligand>
</feature>
<feature type="binding site" evidence="1">
    <location>
        <position position="217"/>
    </location>
    <ligand>
        <name>substrate</name>
    </ligand>
</feature>
<name>GSMT_PARMW</name>
<gene>
    <name evidence="4" type="primary">bsmA</name>
    <name type="synonym">gsmt</name>
    <name type="ordered locus">SYNW1914</name>
</gene>
<evidence type="ECO:0000255" key="1">
    <source>
        <dbReference type="PROSITE-ProRule" id="PRU00932"/>
    </source>
</evidence>
<evidence type="ECO:0000256" key="2">
    <source>
        <dbReference type="SAM" id="MobiDB-lite"/>
    </source>
</evidence>
<evidence type="ECO:0000269" key="3">
    <source>
    </source>
</evidence>
<evidence type="ECO:0000303" key="4">
    <source>
    </source>
</evidence>
<evidence type="ECO:0000305" key="5">
    <source>
    </source>
</evidence>
<proteinExistence type="evidence at protein level"/>
<keyword id="KW-0489">Methyltransferase</keyword>
<keyword id="KW-0949">S-adenosyl-L-methionine</keyword>
<keyword id="KW-0808">Transferase</keyword>
<sequence length="282" mass="32894">MTSTQNHPLQTQDDQQRFGQSPESVRETDHYQQEYIEDFTDRWDRLIDWNARAEAEGDFFIRLLKEHGARSVLDVATGTGFHSIRLLEEGFDVVSADGSPNMLARAFRNARNRDQLLRTSQADWRFLNRDIHGEFDAVICLGNSFTHLFKERDRRKALAEYYAVLKHNGILILDHRNYDRLLEGGSAVRQGKGNVYCGKDVEVGPEHVDEGLARFRYSFSDGGVYHLNMFPLRYGYVRRLMSEVGFQQITSFGDYQRDFENPDFYVHVAEKEYRFDVDTTMH</sequence>
<organism>
    <name type="scientific">Parasynechococcus marenigrum (strain WH8102)</name>
    <dbReference type="NCBI Taxonomy" id="84588"/>
    <lineage>
        <taxon>Bacteria</taxon>
        <taxon>Bacillati</taxon>
        <taxon>Cyanobacteriota</taxon>
        <taxon>Cyanophyceae</taxon>
        <taxon>Synechococcales</taxon>
        <taxon>Prochlorococcaceae</taxon>
        <taxon>Parasynechococcus</taxon>
        <taxon>Parasynechococcus marenigrum</taxon>
    </lineage>
</organism>
<reference key="1">
    <citation type="journal article" date="2003" name="Nature">
        <title>The genome of a motile marine Synechococcus.</title>
        <authorList>
            <person name="Palenik B."/>
            <person name="Brahamsha B."/>
            <person name="Larimer F.W."/>
            <person name="Land M.L."/>
            <person name="Hauser L."/>
            <person name="Chain P."/>
            <person name="Lamerdin J.E."/>
            <person name="Regala W."/>
            <person name="Allen E.E."/>
            <person name="McCarren J."/>
            <person name="Paulsen I.T."/>
            <person name="Dufresne A."/>
            <person name="Partensky F."/>
            <person name="Webb E.A."/>
            <person name="Waterbury J."/>
        </authorList>
    </citation>
    <scope>NUCLEOTIDE SEQUENCE [LARGE SCALE GENOMIC DNA]</scope>
    <source>
        <strain>WH8102</strain>
    </source>
</reference>
<reference key="2">
    <citation type="journal article" date="2006" name="Arch. Microbiol.">
        <title>Identification of glycine betaine as compatible solute in Synechococcus sp. WH8102 and characterization of its N-methyltransferase genes involved in betaine synthesis.</title>
        <authorList>
            <person name="Lu W.D."/>
            <person name="Chi Z.M."/>
            <person name="Su C.D."/>
        </authorList>
    </citation>
    <scope>FUNCTION IN THE BETAINE BIOSYNTHESIS</scope>
    <scope>CATALYTIC ACTIVITY</scope>
    <scope>SUBSTRATE SPECIFICITY</scope>
    <scope>BIOPHYSICOCHEMICAL PROPERTIES</scope>
    <scope>SUBUNIT</scope>
</reference>
<comment type="function">
    <text evidence="3">Catalyzes the methylation of glycine and sarcosine to sarcosine and dimethylglycine, respectively, with S-adenosylmethionine (AdoMet) acting as the methyl donor. It has strict specificity for glycine and sarcosine as the methyl group acceptors.</text>
</comment>
<comment type="catalytic activity">
    <reaction evidence="3">
        <text>glycine + 2 S-adenosyl-L-methionine = N,N-dimethylglycine + 2 S-adenosyl-L-homocysteine + 2 H(+)</text>
        <dbReference type="Rhea" id="RHEA:32463"/>
        <dbReference type="ChEBI" id="CHEBI:15378"/>
        <dbReference type="ChEBI" id="CHEBI:57305"/>
        <dbReference type="ChEBI" id="CHEBI:57856"/>
        <dbReference type="ChEBI" id="CHEBI:58251"/>
        <dbReference type="ChEBI" id="CHEBI:59789"/>
        <dbReference type="EC" id="2.1.1.156"/>
    </reaction>
    <physiologicalReaction direction="left-to-right" evidence="3">
        <dbReference type="Rhea" id="RHEA:32464"/>
    </physiologicalReaction>
</comment>
<comment type="catalytic activity">
    <reaction evidence="3">
        <text>glycine + S-adenosyl-L-methionine = sarcosine + S-adenosyl-L-homocysteine + H(+)</text>
        <dbReference type="Rhea" id="RHEA:19937"/>
        <dbReference type="ChEBI" id="CHEBI:15378"/>
        <dbReference type="ChEBI" id="CHEBI:57305"/>
        <dbReference type="ChEBI" id="CHEBI:57433"/>
        <dbReference type="ChEBI" id="CHEBI:57856"/>
        <dbReference type="ChEBI" id="CHEBI:59789"/>
    </reaction>
    <physiologicalReaction direction="left-to-right" evidence="3">
        <dbReference type="Rhea" id="RHEA:19938"/>
    </physiologicalReaction>
</comment>
<comment type="catalytic activity">
    <reaction evidence="3">
        <text>sarcosine + S-adenosyl-L-methionine = N,N-dimethylglycine + S-adenosyl-L-homocysteine + H(+)</text>
        <dbReference type="Rhea" id="RHEA:15453"/>
        <dbReference type="ChEBI" id="CHEBI:15378"/>
        <dbReference type="ChEBI" id="CHEBI:57433"/>
        <dbReference type="ChEBI" id="CHEBI:57856"/>
        <dbReference type="ChEBI" id="CHEBI:58251"/>
        <dbReference type="ChEBI" id="CHEBI:59789"/>
    </reaction>
    <physiologicalReaction direction="left-to-right" evidence="3">
        <dbReference type="Rhea" id="RHEA:15454"/>
    </physiologicalReaction>
</comment>
<comment type="biophysicochemical properties">
    <kinetics>
        <KM evidence="3">0.3 mM for AdoMet (with glycine at pH 8.2 and at 37 degrees Celsius)</KM>
        <KM evidence="3">0.44 mM for AdoMet (with sarcosine at pH 8.0 and at 37 degrees Celsius)</KM>
        <KM evidence="3">2.94 mM for sarcosine (at pH 8.0 and at 37 degrees Celsius)</KM>
        <KM evidence="3">5.22 mM for glycine (at pH 8.2 and at 37 degrees Celsius)</KM>
        <Vmax evidence="3">0.74 umol/min/mg enzyme with AdoMet as substrate (with sarcosine at pH 8.0 and at 37 degrees Celsius)</Vmax>
        <Vmax evidence="3">0.78 umol/min/mg enzyme with sarcosine as substrate (at pH 8.0 and at 37 degrees Celsius)</Vmax>
        <Vmax evidence="3">1.3 umol/min/mg enzyme with AdoMet as substrate (with glycine at pH 8.2 and at 37 degrees Celsius)</Vmax>
        <Vmax evidence="3">1.48 umol/min/mg enzyme with glycine as substrate (at pH 8.2 and at 37 degrees Celsius)</Vmax>
    </kinetics>
    <phDependence>
        <text evidence="3">Optimum pH is around 8.2 and 8.0 for glycine and sarcosine, respectively.</text>
    </phDependence>
</comment>
<comment type="pathway">
    <text evidence="5">Amine and polyamine biosynthesis; betaine biosynthesis via glycine pathway; betaine from glycine: step 1/3.</text>
</comment>
<comment type="pathway">
    <text evidence="5">Amine and polyamine biosynthesis; betaine biosynthesis via glycine pathway; betaine from glycine: step 2/3.</text>
</comment>
<comment type="subunit">
    <text evidence="3">Monomer.</text>
</comment>
<comment type="similarity">
    <text evidence="1">Belongs to the class I-like SAM-binding methyltransferase superfamily. Glycine N-methyltransferase family.</text>
</comment>
<protein>
    <recommendedName>
        <fullName>Glycine/sarcosine N-methyltransferase</fullName>
        <ecNumber evidence="3">2.1.1.156</ecNumber>
    </recommendedName>
    <alternativeName>
        <fullName evidence="4">Betaine synthesis N-methyltransferase A</fullName>
    </alternativeName>
</protein>